<organism>
    <name type="scientific">Salmonella agona (strain SL483)</name>
    <dbReference type="NCBI Taxonomy" id="454166"/>
    <lineage>
        <taxon>Bacteria</taxon>
        <taxon>Pseudomonadati</taxon>
        <taxon>Pseudomonadota</taxon>
        <taxon>Gammaproteobacteria</taxon>
        <taxon>Enterobacterales</taxon>
        <taxon>Enterobacteriaceae</taxon>
        <taxon>Salmonella</taxon>
    </lineage>
</organism>
<reference key="1">
    <citation type="journal article" date="2011" name="J. Bacteriol.">
        <title>Comparative genomics of 28 Salmonella enterica isolates: evidence for CRISPR-mediated adaptive sublineage evolution.</title>
        <authorList>
            <person name="Fricke W.F."/>
            <person name="Mammel M.K."/>
            <person name="McDermott P.F."/>
            <person name="Tartera C."/>
            <person name="White D.G."/>
            <person name="Leclerc J.E."/>
            <person name="Ravel J."/>
            <person name="Cebula T.A."/>
        </authorList>
    </citation>
    <scope>NUCLEOTIDE SEQUENCE [LARGE SCALE GENOMIC DNA]</scope>
    <source>
        <strain>SL483</strain>
    </source>
</reference>
<sequence length="234" mass="26278">MLFSPPLQRATLIQRYKRFLADVITPDGTTLTLHCPNTGAMTGCATPGDTVWYSTSENTKRKYPHTWELTETQFGAFICVNTLRANQLTKEAIQENRLPALEGYNILKSEVKYGAERSRIDFMLQADFRPDCYIEVKSVTLAEKENGYFPDAITERGQKHLRELMGVAAAGHRAVVVFAVLHSAITRFSPARHIDIKYAQLLSEAQNKGVEVLAYKAELSAQKMELNEPVPITL</sequence>
<feature type="chain" id="PRO_1000093585" description="Sugar fermentation stimulation protein A">
    <location>
        <begin position="1"/>
        <end position="234"/>
    </location>
</feature>
<feature type="DNA-binding region" description="H-T-H motif" evidence="1">
    <location>
        <begin position="201"/>
        <end position="220"/>
    </location>
</feature>
<dbReference type="EMBL" id="CP001138">
    <property type="protein sequence ID" value="ACH49242.1"/>
    <property type="molecule type" value="Genomic_DNA"/>
</dbReference>
<dbReference type="RefSeq" id="WP_000899410.1">
    <property type="nucleotide sequence ID" value="NC_011149.1"/>
</dbReference>
<dbReference type="SMR" id="B5F838"/>
<dbReference type="KEGG" id="sea:SeAg_B0221"/>
<dbReference type="HOGENOM" id="CLU_052299_2_0_6"/>
<dbReference type="Proteomes" id="UP000008819">
    <property type="component" value="Chromosome"/>
</dbReference>
<dbReference type="GO" id="GO:0003677">
    <property type="term" value="F:DNA binding"/>
    <property type="evidence" value="ECO:0007669"/>
    <property type="project" value="UniProtKB-KW"/>
</dbReference>
<dbReference type="CDD" id="cd22359">
    <property type="entry name" value="SfsA-like_bacterial"/>
    <property type="match status" value="1"/>
</dbReference>
<dbReference type="FunFam" id="2.40.50.580:FF:000001">
    <property type="entry name" value="Sugar fermentation stimulation protein A"/>
    <property type="match status" value="1"/>
</dbReference>
<dbReference type="FunFam" id="3.40.1350.60:FF:000001">
    <property type="entry name" value="Sugar fermentation stimulation protein A"/>
    <property type="match status" value="1"/>
</dbReference>
<dbReference type="Gene3D" id="2.40.50.580">
    <property type="match status" value="1"/>
</dbReference>
<dbReference type="Gene3D" id="3.40.1350.60">
    <property type="match status" value="1"/>
</dbReference>
<dbReference type="HAMAP" id="MF_00095">
    <property type="entry name" value="SfsA"/>
    <property type="match status" value="1"/>
</dbReference>
<dbReference type="InterPro" id="IPR005224">
    <property type="entry name" value="SfsA"/>
</dbReference>
<dbReference type="InterPro" id="IPR040452">
    <property type="entry name" value="SfsA_C"/>
</dbReference>
<dbReference type="InterPro" id="IPR041465">
    <property type="entry name" value="SfsA_N"/>
</dbReference>
<dbReference type="NCBIfam" id="TIGR00230">
    <property type="entry name" value="sfsA"/>
    <property type="match status" value="1"/>
</dbReference>
<dbReference type="PANTHER" id="PTHR30545">
    <property type="entry name" value="SUGAR FERMENTATION STIMULATION PROTEIN A"/>
    <property type="match status" value="1"/>
</dbReference>
<dbReference type="PANTHER" id="PTHR30545:SF2">
    <property type="entry name" value="SUGAR FERMENTATION STIMULATION PROTEIN A"/>
    <property type="match status" value="1"/>
</dbReference>
<dbReference type="Pfam" id="PF03749">
    <property type="entry name" value="SfsA"/>
    <property type="match status" value="1"/>
</dbReference>
<dbReference type="Pfam" id="PF17746">
    <property type="entry name" value="SfsA_N"/>
    <property type="match status" value="1"/>
</dbReference>
<gene>
    <name evidence="1" type="primary">sfsA</name>
    <name type="ordered locus">SeAg_B0221</name>
</gene>
<protein>
    <recommendedName>
        <fullName evidence="1">Sugar fermentation stimulation protein A</fullName>
    </recommendedName>
</protein>
<comment type="function">
    <text evidence="1">Binds to DNA non-specifically. Could be a regulatory factor involved in maltose metabolism.</text>
</comment>
<comment type="similarity">
    <text evidence="1">Belongs to the SfsA family.</text>
</comment>
<accession>B5F838</accession>
<name>SFSA_SALA4</name>
<evidence type="ECO:0000255" key="1">
    <source>
        <dbReference type="HAMAP-Rule" id="MF_00095"/>
    </source>
</evidence>
<keyword id="KW-0238">DNA-binding</keyword>
<proteinExistence type="inferred from homology"/>